<sequence length="155" mass="17440">MKIQLIAVGTKMPNWVTMGFEEYQRRFPKEMPFELIEIPAGKRGKNADIKRILEQEGKAMLAACGKSRIVTLDIPGKPWTTEQLATQLEVWKNDGRDLSLLIGGPEGLSAECKAAAEQSWSLSPLTLPHPLVRVVVAESLYRAWSVTMNHPYHRE</sequence>
<gene>
    <name evidence="1" type="primary">rlmH</name>
    <name type="ordered locus">PM1923</name>
</gene>
<dbReference type="EC" id="2.1.1.177" evidence="1"/>
<dbReference type="EMBL" id="AE004439">
    <property type="protein sequence ID" value="AAK04007.1"/>
    <property type="molecule type" value="Genomic_DNA"/>
</dbReference>
<dbReference type="RefSeq" id="WP_010907403.1">
    <property type="nucleotide sequence ID" value="NC_002663.1"/>
</dbReference>
<dbReference type="SMR" id="Q9CJR9"/>
<dbReference type="STRING" id="272843.PM1923"/>
<dbReference type="EnsemblBacteria" id="AAK04007">
    <property type="protein sequence ID" value="AAK04007"/>
    <property type="gene ID" value="PM1923"/>
</dbReference>
<dbReference type="KEGG" id="pmu:PM1923"/>
<dbReference type="PATRIC" id="fig|272843.6.peg.1945"/>
<dbReference type="HOGENOM" id="CLU_100552_1_0_6"/>
<dbReference type="OrthoDB" id="9806643at2"/>
<dbReference type="Proteomes" id="UP000000809">
    <property type="component" value="Chromosome"/>
</dbReference>
<dbReference type="GO" id="GO:0005737">
    <property type="term" value="C:cytoplasm"/>
    <property type="evidence" value="ECO:0007669"/>
    <property type="project" value="UniProtKB-SubCell"/>
</dbReference>
<dbReference type="GO" id="GO:0070038">
    <property type="term" value="F:rRNA (pseudouridine-N3-)-methyltransferase activity"/>
    <property type="evidence" value="ECO:0007669"/>
    <property type="project" value="UniProtKB-UniRule"/>
</dbReference>
<dbReference type="CDD" id="cd18081">
    <property type="entry name" value="RlmH-like"/>
    <property type="match status" value="1"/>
</dbReference>
<dbReference type="Gene3D" id="3.40.1280.10">
    <property type="match status" value="1"/>
</dbReference>
<dbReference type="HAMAP" id="MF_00658">
    <property type="entry name" value="23SrRNA_methyltr_H"/>
    <property type="match status" value="1"/>
</dbReference>
<dbReference type="InterPro" id="IPR029028">
    <property type="entry name" value="Alpha/beta_knot_MTases"/>
</dbReference>
<dbReference type="InterPro" id="IPR003742">
    <property type="entry name" value="RlmH-like"/>
</dbReference>
<dbReference type="InterPro" id="IPR029026">
    <property type="entry name" value="tRNA_m1G_MTases_N"/>
</dbReference>
<dbReference type="NCBIfam" id="NF000984">
    <property type="entry name" value="PRK00103.1-1"/>
    <property type="match status" value="1"/>
</dbReference>
<dbReference type="NCBIfam" id="NF000986">
    <property type="entry name" value="PRK00103.1-4"/>
    <property type="match status" value="1"/>
</dbReference>
<dbReference type="NCBIfam" id="TIGR00246">
    <property type="entry name" value="tRNA_RlmH_YbeA"/>
    <property type="match status" value="1"/>
</dbReference>
<dbReference type="PANTHER" id="PTHR33603">
    <property type="entry name" value="METHYLTRANSFERASE"/>
    <property type="match status" value="1"/>
</dbReference>
<dbReference type="PANTHER" id="PTHR33603:SF1">
    <property type="entry name" value="RIBOSOMAL RNA LARGE SUBUNIT METHYLTRANSFERASE H"/>
    <property type="match status" value="1"/>
</dbReference>
<dbReference type="Pfam" id="PF02590">
    <property type="entry name" value="SPOUT_MTase"/>
    <property type="match status" value="1"/>
</dbReference>
<dbReference type="PIRSF" id="PIRSF004505">
    <property type="entry name" value="MT_bac"/>
    <property type="match status" value="1"/>
</dbReference>
<dbReference type="SUPFAM" id="SSF75217">
    <property type="entry name" value="alpha/beta knot"/>
    <property type="match status" value="1"/>
</dbReference>
<reference key="1">
    <citation type="journal article" date="2001" name="Proc. Natl. Acad. Sci. U.S.A.">
        <title>Complete genomic sequence of Pasteurella multocida Pm70.</title>
        <authorList>
            <person name="May B.J."/>
            <person name="Zhang Q."/>
            <person name="Li L.L."/>
            <person name="Paustian M.L."/>
            <person name="Whittam T.S."/>
            <person name="Kapur V."/>
        </authorList>
    </citation>
    <scope>NUCLEOTIDE SEQUENCE [LARGE SCALE GENOMIC DNA]</scope>
    <source>
        <strain>Pm70</strain>
    </source>
</reference>
<evidence type="ECO:0000255" key="1">
    <source>
        <dbReference type="HAMAP-Rule" id="MF_00658"/>
    </source>
</evidence>
<name>RLMH_PASMU</name>
<accession>Q9CJR9</accession>
<keyword id="KW-0963">Cytoplasm</keyword>
<keyword id="KW-0489">Methyltransferase</keyword>
<keyword id="KW-1185">Reference proteome</keyword>
<keyword id="KW-0698">rRNA processing</keyword>
<keyword id="KW-0949">S-adenosyl-L-methionine</keyword>
<keyword id="KW-0808">Transferase</keyword>
<feature type="chain" id="PRO_0000198155" description="Ribosomal RNA large subunit methyltransferase H">
    <location>
        <begin position="1"/>
        <end position="155"/>
    </location>
</feature>
<feature type="binding site" evidence="1">
    <location>
        <position position="72"/>
    </location>
    <ligand>
        <name>S-adenosyl-L-methionine</name>
        <dbReference type="ChEBI" id="CHEBI:59789"/>
    </ligand>
</feature>
<feature type="binding site" evidence="1">
    <location>
        <position position="103"/>
    </location>
    <ligand>
        <name>S-adenosyl-L-methionine</name>
        <dbReference type="ChEBI" id="CHEBI:59789"/>
    </ligand>
</feature>
<feature type="binding site" evidence="1">
    <location>
        <begin position="122"/>
        <end position="127"/>
    </location>
    <ligand>
        <name>S-adenosyl-L-methionine</name>
        <dbReference type="ChEBI" id="CHEBI:59789"/>
    </ligand>
</feature>
<proteinExistence type="inferred from homology"/>
<organism>
    <name type="scientific">Pasteurella multocida (strain Pm70)</name>
    <dbReference type="NCBI Taxonomy" id="272843"/>
    <lineage>
        <taxon>Bacteria</taxon>
        <taxon>Pseudomonadati</taxon>
        <taxon>Pseudomonadota</taxon>
        <taxon>Gammaproteobacteria</taxon>
        <taxon>Pasteurellales</taxon>
        <taxon>Pasteurellaceae</taxon>
        <taxon>Pasteurella</taxon>
    </lineage>
</organism>
<protein>
    <recommendedName>
        <fullName evidence="1">Ribosomal RNA large subunit methyltransferase H</fullName>
        <ecNumber evidence="1">2.1.1.177</ecNumber>
    </recommendedName>
    <alternativeName>
        <fullName evidence="1">23S rRNA (pseudouridine1915-N3)-methyltransferase</fullName>
    </alternativeName>
    <alternativeName>
        <fullName evidence="1">23S rRNA m3Psi1915 methyltransferase</fullName>
    </alternativeName>
    <alternativeName>
        <fullName evidence="1">rRNA (pseudouridine-N3-)-methyltransferase RlmH</fullName>
    </alternativeName>
</protein>
<comment type="function">
    <text evidence="1">Specifically methylates the pseudouridine at position 1915 (m3Psi1915) in 23S rRNA.</text>
</comment>
<comment type="catalytic activity">
    <reaction evidence="1">
        <text>pseudouridine(1915) in 23S rRNA + S-adenosyl-L-methionine = N(3)-methylpseudouridine(1915) in 23S rRNA + S-adenosyl-L-homocysteine + H(+)</text>
        <dbReference type="Rhea" id="RHEA:42752"/>
        <dbReference type="Rhea" id="RHEA-COMP:10221"/>
        <dbReference type="Rhea" id="RHEA-COMP:10222"/>
        <dbReference type="ChEBI" id="CHEBI:15378"/>
        <dbReference type="ChEBI" id="CHEBI:57856"/>
        <dbReference type="ChEBI" id="CHEBI:59789"/>
        <dbReference type="ChEBI" id="CHEBI:65314"/>
        <dbReference type="ChEBI" id="CHEBI:74486"/>
        <dbReference type="EC" id="2.1.1.177"/>
    </reaction>
</comment>
<comment type="subunit">
    <text evidence="1">Homodimer.</text>
</comment>
<comment type="subcellular location">
    <subcellularLocation>
        <location evidence="1">Cytoplasm</location>
    </subcellularLocation>
</comment>
<comment type="similarity">
    <text evidence="1">Belongs to the RNA methyltransferase RlmH family.</text>
</comment>